<reference key="1">
    <citation type="journal article" date="2006" name="Proc. Natl. Acad. Sci. U.S.A.">
        <title>The partitioned Rhizobium etli genome: genetic and metabolic redundancy in seven interacting replicons.</title>
        <authorList>
            <person name="Gonzalez V."/>
            <person name="Santamaria R.I."/>
            <person name="Bustos P."/>
            <person name="Hernandez-Gonzalez I."/>
            <person name="Medrano-Soto A."/>
            <person name="Moreno-Hagelsieb G."/>
            <person name="Janga S.C."/>
            <person name="Ramirez M.A."/>
            <person name="Jimenez-Jacinto V."/>
            <person name="Collado-Vides J."/>
            <person name="Davila G."/>
        </authorList>
    </citation>
    <scope>NUCLEOTIDE SEQUENCE [LARGE SCALE GENOMIC DNA]</scope>
    <source>
        <strain>ATCC 51251 / DSM 11541 / JCM 21823 / NBRC 15573 / CFN 42</strain>
    </source>
</reference>
<sequence length="158" mass="16251">MKLNEIKDNEGSTHSRKRLGRGIGSGSGKTAGRGVKGQKSRSGVAINGFEGGQMPIYRRLPKRGFNNIFASDFVVVSLARIQAAIDAGKLDAKATVDAAALKAAGVIRRAKDGVRVLADGDLKAKITIVVAGASKPAVEKIEKAGGTVTLLSAPAAAE</sequence>
<gene>
    <name evidence="1" type="primary">rplO</name>
    <name type="ordered locus">RHE_CH01694</name>
</gene>
<protein>
    <recommendedName>
        <fullName evidence="1">Large ribosomal subunit protein uL15</fullName>
    </recommendedName>
    <alternativeName>
        <fullName evidence="3">50S ribosomal protein L15</fullName>
    </alternativeName>
</protein>
<dbReference type="EMBL" id="CP000133">
    <property type="protein sequence ID" value="ABC90489.1"/>
    <property type="molecule type" value="Genomic_DNA"/>
</dbReference>
<dbReference type="RefSeq" id="WP_011424989.1">
    <property type="nucleotide sequence ID" value="NC_007761.1"/>
</dbReference>
<dbReference type="SMR" id="Q2K9J7"/>
<dbReference type="KEGG" id="ret:RHE_CH01694"/>
<dbReference type="eggNOG" id="COG0200">
    <property type="taxonomic scope" value="Bacteria"/>
</dbReference>
<dbReference type="HOGENOM" id="CLU_055188_4_0_5"/>
<dbReference type="OrthoDB" id="9810293at2"/>
<dbReference type="Proteomes" id="UP000001936">
    <property type="component" value="Chromosome"/>
</dbReference>
<dbReference type="GO" id="GO:0022625">
    <property type="term" value="C:cytosolic large ribosomal subunit"/>
    <property type="evidence" value="ECO:0007669"/>
    <property type="project" value="TreeGrafter"/>
</dbReference>
<dbReference type="GO" id="GO:0019843">
    <property type="term" value="F:rRNA binding"/>
    <property type="evidence" value="ECO:0007669"/>
    <property type="project" value="UniProtKB-UniRule"/>
</dbReference>
<dbReference type="GO" id="GO:0003735">
    <property type="term" value="F:structural constituent of ribosome"/>
    <property type="evidence" value="ECO:0007669"/>
    <property type="project" value="InterPro"/>
</dbReference>
<dbReference type="GO" id="GO:0006412">
    <property type="term" value="P:translation"/>
    <property type="evidence" value="ECO:0007669"/>
    <property type="project" value="UniProtKB-UniRule"/>
</dbReference>
<dbReference type="Gene3D" id="3.100.10.10">
    <property type="match status" value="1"/>
</dbReference>
<dbReference type="HAMAP" id="MF_01341">
    <property type="entry name" value="Ribosomal_uL15"/>
    <property type="match status" value="1"/>
</dbReference>
<dbReference type="InterPro" id="IPR030878">
    <property type="entry name" value="Ribosomal_uL15"/>
</dbReference>
<dbReference type="InterPro" id="IPR021131">
    <property type="entry name" value="Ribosomal_uL15/eL18"/>
</dbReference>
<dbReference type="InterPro" id="IPR036227">
    <property type="entry name" value="Ribosomal_uL15/eL18_sf"/>
</dbReference>
<dbReference type="InterPro" id="IPR005749">
    <property type="entry name" value="Ribosomal_uL15_bac-type"/>
</dbReference>
<dbReference type="InterPro" id="IPR001196">
    <property type="entry name" value="Ribosomal_uL15_CS"/>
</dbReference>
<dbReference type="NCBIfam" id="TIGR01071">
    <property type="entry name" value="rplO_bact"/>
    <property type="match status" value="1"/>
</dbReference>
<dbReference type="PANTHER" id="PTHR12934">
    <property type="entry name" value="50S RIBOSOMAL PROTEIN L15"/>
    <property type="match status" value="1"/>
</dbReference>
<dbReference type="PANTHER" id="PTHR12934:SF11">
    <property type="entry name" value="LARGE RIBOSOMAL SUBUNIT PROTEIN UL15M"/>
    <property type="match status" value="1"/>
</dbReference>
<dbReference type="Pfam" id="PF00828">
    <property type="entry name" value="Ribosomal_L27A"/>
    <property type="match status" value="1"/>
</dbReference>
<dbReference type="SUPFAM" id="SSF52080">
    <property type="entry name" value="Ribosomal proteins L15p and L18e"/>
    <property type="match status" value="1"/>
</dbReference>
<dbReference type="PROSITE" id="PS00475">
    <property type="entry name" value="RIBOSOMAL_L15"/>
    <property type="match status" value="1"/>
</dbReference>
<keyword id="KW-1185">Reference proteome</keyword>
<keyword id="KW-0687">Ribonucleoprotein</keyword>
<keyword id="KW-0689">Ribosomal protein</keyword>
<keyword id="KW-0694">RNA-binding</keyword>
<keyword id="KW-0699">rRNA-binding</keyword>
<evidence type="ECO:0000255" key="1">
    <source>
        <dbReference type="HAMAP-Rule" id="MF_01341"/>
    </source>
</evidence>
<evidence type="ECO:0000256" key="2">
    <source>
        <dbReference type="SAM" id="MobiDB-lite"/>
    </source>
</evidence>
<evidence type="ECO:0000305" key="3"/>
<proteinExistence type="inferred from homology"/>
<comment type="function">
    <text evidence="1">Binds to the 23S rRNA.</text>
</comment>
<comment type="subunit">
    <text evidence="1">Part of the 50S ribosomal subunit.</text>
</comment>
<comment type="similarity">
    <text evidence="1">Belongs to the universal ribosomal protein uL15 family.</text>
</comment>
<feature type="chain" id="PRO_0000251546" description="Large ribosomal subunit protein uL15">
    <location>
        <begin position="1"/>
        <end position="158"/>
    </location>
</feature>
<feature type="region of interest" description="Disordered" evidence="2">
    <location>
        <begin position="1"/>
        <end position="44"/>
    </location>
</feature>
<feature type="compositionally biased region" description="Basic and acidic residues" evidence="2">
    <location>
        <begin position="1"/>
        <end position="13"/>
    </location>
</feature>
<feature type="compositionally biased region" description="Gly residues" evidence="2">
    <location>
        <begin position="21"/>
        <end position="35"/>
    </location>
</feature>
<accession>Q2K9J7</accession>
<name>RL15_RHIEC</name>
<organism>
    <name type="scientific">Rhizobium etli (strain ATCC 51251 / DSM 11541 / JCM 21823 / NBRC 15573 / CFN 42)</name>
    <dbReference type="NCBI Taxonomy" id="347834"/>
    <lineage>
        <taxon>Bacteria</taxon>
        <taxon>Pseudomonadati</taxon>
        <taxon>Pseudomonadota</taxon>
        <taxon>Alphaproteobacteria</taxon>
        <taxon>Hyphomicrobiales</taxon>
        <taxon>Rhizobiaceae</taxon>
        <taxon>Rhizobium/Agrobacterium group</taxon>
        <taxon>Rhizobium</taxon>
    </lineage>
</organism>